<reference key="1">
    <citation type="journal article" date="1985" name="J. Biol. Chem.">
        <title>(Cu,Zn)-metallothioneins from fetal bovine liver. Chemical and spectroscopic properties.</title>
        <authorList>
            <person name="Muenger K."/>
            <person name="Germann U.A."/>
            <person name="Beltramini M."/>
            <person name="Niedermann D."/>
            <person name="Baitella-Eberle G."/>
            <person name="Kaegi J.H.R."/>
            <person name="Lerch K."/>
        </authorList>
    </citation>
    <scope>PROTEIN SEQUENCE</scope>
    <scope>ACETYLATION AT MET-1</scope>
    <source>
        <tissue>Liver</tissue>
    </source>
</reference>
<reference key="2">
    <citation type="submission" date="2002-06" db="EMBL/GenBank/DDBJ databases">
        <title>Bovine metallothioneins in Italian population.</title>
        <authorList>
            <person name="Salvini M."/>
            <person name="Conte G."/>
            <person name="Taddei S."/>
            <person name="Durante M."/>
        </authorList>
    </citation>
    <scope>NUCLEOTIDE SEQUENCE [MRNA]</scope>
</reference>
<protein>
    <recommendedName>
        <fullName>Metallothionein-2</fullName>
        <shortName>MT-2</shortName>
    </recommendedName>
    <alternativeName>
        <fullName>Metallothionein-II</fullName>
        <shortName>MT-II</shortName>
    </alternativeName>
</protein>
<sequence length="61" mass="6028">MDPNCSCTAGESCTCAGSCKCKDCKCASCKKSCCSCCPVGCAKCAQGCVCKGASDKCSCCA</sequence>
<keyword id="KW-0007">Acetylation</keyword>
<keyword id="KW-0903">Direct protein sequencing</keyword>
<keyword id="KW-0479">Metal-binding</keyword>
<keyword id="KW-0480">Metal-thiolate cluster</keyword>
<keyword id="KW-0597">Phosphoprotein</keyword>
<keyword id="KW-1185">Reference proteome</keyword>
<organism>
    <name type="scientific">Bos taurus</name>
    <name type="common">Bovine</name>
    <dbReference type="NCBI Taxonomy" id="9913"/>
    <lineage>
        <taxon>Eukaryota</taxon>
        <taxon>Metazoa</taxon>
        <taxon>Chordata</taxon>
        <taxon>Craniata</taxon>
        <taxon>Vertebrata</taxon>
        <taxon>Euteleostomi</taxon>
        <taxon>Mammalia</taxon>
        <taxon>Eutheria</taxon>
        <taxon>Laurasiatheria</taxon>
        <taxon>Artiodactyla</taxon>
        <taxon>Ruminantia</taxon>
        <taxon>Pecora</taxon>
        <taxon>Bovidae</taxon>
        <taxon>Bovinae</taxon>
        <taxon>Bos</taxon>
    </lineage>
</organism>
<accession>P68301</accession>
<accession>P09579</accession>
<accession>Q546G1</accession>
<dbReference type="EMBL" id="AJ489256">
    <property type="protein sequence ID" value="CAD33256.1"/>
    <property type="molecule type" value="mRNA"/>
</dbReference>
<dbReference type="PIR" id="B23889">
    <property type="entry name" value="B23889"/>
</dbReference>
<dbReference type="RefSeq" id="NP_001068608.1">
    <property type="nucleotide sequence ID" value="NM_001075140.1"/>
</dbReference>
<dbReference type="SMR" id="P68301"/>
<dbReference type="FunCoup" id="P68301">
    <property type="interactions" value="3"/>
</dbReference>
<dbReference type="STRING" id="9913.ENSBTAP00000034269"/>
<dbReference type="iPTMnet" id="P68301"/>
<dbReference type="PaxDb" id="9913-ENSBTAP00000034269"/>
<dbReference type="Ensembl" id="ENSBTAT00000034373.5">
    <property type="protein sequence ID" value="ENSBTAP00000034269.3"/>
    <property type="gene ID" value="ENSBTAG00000023659.6"/>
</dbReference>
<dbReference type="GeneID" id="404070"/>
<dbReference type="KEGG" id="bta:404070"/>
<dbReference type="CTD" id="4502"/>
<dbReference type="VEuPathDB" id="HostDB:ENSBTAG00000023659"/>
<dbReference type="eggNOG" id="KOG4738">
    <property type="taxonomic scope" value="Eukaryota"/>
</dbReference>
<dbReference type="GeneTree" id="ENSGT00950000182967"/>
<dbReference type="HOGENOM" id="CLU_171204_2_0_1"/>
<dbReference type="InParanoid" id="P68301"/>
<dbReference type="OMA" id="SEDCSCF"/>
<dbReference type="TreeFam" id="TF336054"/>
<dbReference type="Reactome" id="R-BTA-5661231">
    <property type="pathway name" value="Metallothioneins bind metals"/>
</dbReference>
<dbReference type="Proteomes" id="UP000009136">
    <property type="component" value="Chromosome 18"/>
</dbReference>
<dbReference type="Bgee" id="ENSBTAG00000023659">
    <property type="expression patterns" value="Expressed in temporal cortex and 103 other cell types or tissues"/>
</dbReference>
<dbReference type="GO" id="GO:0005737">
    <property type="term" value="C:cytoplasm"/>
    <property type="evidence" value="ECO:0000250"/>
    <property type="project" value="UniProtKB"/>
</dbReference>
<dbReference type="GO" id="GO:0005634">
    <property type="term" value="C:nucleus"/>
    <property type="evidence" value="ECO:0000250"/>
    <property type="project" value="UniProtKB"/>
</dbReference>
<dbReference type="GO" id="GO:0046872">
    <property type="term" value="F:metal ion binding"/>
    <property type="evidence" value="ECO:0000318"/>
    <property type="project" value="GO_Central"/>
</dbReference>
<dbReference type="GO" id="GO:0008270">
    <property type="term" value="F:zinc ion binding"/>
    <property type="evidence" value="ECO:0000250"/>
    <property type="project" value="UniProtKB"/>
</dbReference>
<dbReference type="GO" id="GO:0071276">
    <property type="term" value="P:cellular response to cadmium ion"/>
    <property type="evidence" value="ECO:0000318"/>
    <property type="project" value="GO_Central"/>
</dbReference>
<dbReference type="GO" id="GO:0071280">
    <property type="term" value="P:cellular response to copper ion"/>
    <property type="evidence" value="ECO:0000318"/>
    <property type="project" value="GO_Central"/>
</dbReference>
<dbReference type="GO" id="GO:0036018">
    <property type="term" value="P:cellular response to erythropoietin"/>
    <property type="evidence" value="ECO:0007669"/>
    <property type="project" value="Ensembl"/>
</dbReference>
<dbReference type="GO" id="GO:0071294">
    <property type="term" value="P:cellular response to zinc ion"/>
    <property type="evidence" value="ECO:0000250"/>
    <property type="project" value="UniProtKB"/>
</dbReference>
<dbReference type="GO" id="GO:0010273">
    <property type="term" value="P:detoxification of copper ion"/>
    <property type="evidence" value="ECO:0000318"/>
    <property type="project" value="GO_Central"/>
</dbReference>
<dbReference type="GO" id="GO:0006882">
    <property type="term" value="P:intracellular zinc ion homeostasis"/>
    <property type="evidence" value="ECO:0000318"/>
    <property type="project" value="GO_Central"/>
</dbReference>
<dbReference type="GO" id="GO:0045926">
    <property type="term" value="P:negative regulation of growth"/>
    <property type="evidence" value="ECO:0000250"/>
    <property type="project" value="UniProtKB"/>
</dbReference>
<dbReference type="FunFam" id="4.10.10.10:FF:000001">
    <property type="entry name" value="Metallothionein"/>
    <property type="match status" value="1"/>
</dbReference>
<dbReference type="Gene3D" id="4.10.10.10">
    <property type="entry name" value="Metallothionein Isoform II"/>
    <property type="match status" value="1"/>
</dbReference>
<dbReference type="InterPro" id="IPR017854">
    <property type="entry name" value="Metalthion_dom_sf"/>
</dbReference>
<dbReference type="InterPro" id="IPR023587">
    <property type="entry name" value="Metalthion_dom_sf_vert"/>
</dbReference>
<dbReference type="InterPro" id="IPR000006">
    <property type="entry name" value="Metalthion_vert"/>
</dbReference>
<dbReference type="InterPro" id="IPR018064">
    <property type="entry name" value="Metalthion_vert_metal_BS"/>
</dbReference>
<dbReference type="PANTHER" id="PTHR23299">
    <property type="entry name" value="METALLOTHIONEIN"/>
    <property type="match status" value="1"/>
</dbReference>
<dbReference type="PANTHER" id="PTHR23299:SF59">
    <property type="entry name" value="METALLOTHIONEIN-1B"/>
    <property type="match status" value="1"/>
</dbReference>
<dbReference type="Pfam" id="PF00131">
    <property type="entry name" value="Metallothio"/>
    <property type="match status" value="1"/>
</dbReference>
<dbReference type="PRINTS" id="PR00860">
    <property type="entry name" value="MTVERTEBRATE"/>
</dbReference>
<dbReference type="SUPFAM" id="SSF57868">
    <property type="entry name" value="Metallothionein"/>
    <property type="match status" value="1"/>
</dbReference>
<dbReference type="PROSITE" id="PS00203">
    <property type="entry name" value="METALLOTHIONEIN_VRT"/>
    <property type="match status" value="1"/>
</dbReference>
<gene>
    <name type="primary">MT2A</name>
    <name type="synonym">MT2</name>
</gene>
<evidence type="ECO:0000250" key="1">
    <source>
        <dbReference type="UniProtKB" id="P02795"/>
    </source>
</evidence>
<evidence type="ECO:0000269" key="2">
    <source>
    </source>
</evidence>
<evidence type="ECO:0000305" key="3"/>
<comment type="function">
    <text>Metallothioneins have a high content of cysteine residues that bind various heavy metals; these proteins are transcriptionally regulated by both heavy metals and glucocorticoids.</text>
</comment>
<comment type="subunit">
    <text evidence="1">Interacts with EOLA1.</text>
</comment>
<comment type="domain">
    <text>Class I metallothioneins contain 2 metal-binding domains: four divalent ions are chelated within cluster A of the alpha domain and are coordinated via cysteinyl thiolate bridges to 11 cysteine ligands. Cluster B, the corresponding region within the beta domain, can ligate three divalent ions to 9 cysteines.</text>
</comment>
<comment type="similarity">
    <text evidence="3">Belongs to the metallothionein superfamily. Type 1 family.</text>
</comment>
<feature type="chain" id="PRO_0000197225" description="Metallothionein-2">
    <location>
        <begin position="1"/>
        <end position="61"/>
    </location>
</feature>
<feature type="region of interest" description="Beta">
    <location>
        <begin position="1"/>
        <end position="29"/>
    </location>
</feature>
<feature type="region of interest" description="Alpha">
    <location>
        <begin position="30"/>
        <end position="61"/>
    </location>
</feature>
<feature type="binding site" evidence="1">
    <location>
        <position position="5"/>
    </location>
    <ligand>
        <name>a divalent metal cation</name>
        <dbReference type="ChEBI" id="CHEBI:60240"/>
        <label>1</label>
        <note>in cluster B</note>
    </ligand>
</feature>
<feature type="binding site" evidence="1">
    <location>
        <position position="7"/>
    </location>
    <ligand>
        <name>a divalent metal cation</name>
        <dbReference type="ChEBI" id="CHEBI:60240"/>
        <label>1</label>
        <note>in cluster B</note>
    </ligand>
</feature>
<feature type="binding site" evidence="1">
    <location>
        <position position="7"/>
    </location>
    <ligand>
        <name>a divalent metal cation</name>
        <dbReference type="ChEBI" id="CHEBI:60240"/>
        <label>2</label>
        <note>in cluster B</note>
    </ligand>
</feature>
<feature type="binding site" evidence="1">
    <location>
        <position position="13"/>
    </location>
    <ligand>
        <name>a divalent metal cation</name>
        <dbReference type="ChEBI" id="CHEBI:60240"/>
        <label>2</label>
        <note>in cluster B</note>
    </ligand>
</feature>
<feature type="binding site" evidence="1">
    <location>
        <position position="15"/>
    </location>
    <ligand>
        <name>a divalent metal cation</name>
        <dbReference type="ChEBI" id="CHEBI:60240"/>
        <label>2</label>
        <note>in cluster B</note>
    </ligand>
</feature>
<feature type="binding site" evidence="1">
    <location>
        <position position="15"/>
    </location>
    <ligand>
        <name>a divalent metal cation</name>
        <dbReference type="ChEBI" id="CHEBI:60240"/>
        <label>3</label>
        <note>in cluster B</note>
    </ligand>
</feature>
<feature type="binding site" evidence="1">
    <location>
        <position position="19"/>
    </location>
    <ligand>
        <name>a divalent metal cation</name>
        <dbReference type="ChEBI" id="CHEBI:60240"/>
        <label>3</label>
        <note>in cluster B</note>
    </ligand>
</feature>
<feature type="binding site" evidence="1">
    <location>
        <position position="21"/>
    </location>
    <ligand>
        <name>a divalent metal cation</name>
        <dbReference type="ChEBI" id="CHEBI:60240"/>
        <label>1</label>
        <note>in cluster B</note>
    </ligand>
</feature>
<feature type="binding site" evidence="1">
    <location>
        <position position="24"/>
    </location>
    <ligand>
        <name>a divalent metal cation</name>
        <dbReference type="ChEBI" id="CHEBI:60240"/>
        <label>1</label>
        <note>in cluster B</note>
    </ligand>
</feature>
<feature type="binding site" evidence="1">
    <location>
        <position position="24"/>
    </location>
    <ligand>
        <name>a divalent metal cation</name>
        <dbReference type="ChEBI" id="CHEBI:60240"/>
        <label>3</label>
        <note>in cluster B</note>
    </ligand>
</feature>
<feature type="binding site" evidence="1">
    <location>
        <position position="26"/>
    </location>
    <ligand>
        <name>a divalent metal cation</name>
        <dbReference type="ChEBI" id="CHEBI:60240"/>
        <label>2</label>
        <note>in cluster B</note>
    </ligand>
</feature>
<feature type="binding site" evidence="1">
    <location>
        <position position="29"/>
    </location>
    <ligand>
        <name>a divalent metal cation</name>
        <dbReference type="ChEBI" id="CHEBI:60240"/>
        <label>3</label>
        <note>in cluster B</note>
    </ligand>
</feature>
<feature type="binding site" evidence="1">
    <location>
        <position position="33"/>
    </location>
    <ligand>
        <name>a divalent metal cation</name>
        <dbReference type="ChEBI" id="CHEBI:60240"/>
        <label>4</label>
        <note>in cluster A</note>
    </ligand>
</feature>
<feature type="binding site" evidence="1">
    <location>
        <position position="34"/>
    </location>
    <ligand>
        <name>a divalent metal cation</name>
        <dbReference type="ChEBI" id="CHEBI:60240"/>
        <label>4</label>
        <note>in cluster A</note>
    </ligand>
</feature>
<feature type="binding site" evidence="1">
    <location>
        <position position="34"/>
    </location>
    <ligand>
        <name>a divalent metal cation</name>
        <dbReference type="ChEBI" id="CHEBI:60240"/>
        <label>5</label>
        <note>in cluster A</note>
    </ligand>
</feature>
<feature type="binding site" evidence="1">
    <location>
        <position position="36"/>
    </location>
    <ligand>
        <name>a divalent metal cation</name>
        <dbReference type="ChEBI" id="CHEBI:60240"/>
        <label>5</label>
        <note>in cluster A</note>
    </ligand>
</feature>
<feature type="binding site" evidence="1">
    <location>
        <position position="37"/>
    </location>
    <ligand>
        <name>a divalent metal cation</name>
        <dbReference type="ChEBI" id="CHEBI:60240"/>
        <label>5</label>
        <note>in cluster A</note>
    </ligand>
</feature>
<feature type="binding site" evidence="1">
    <location>
        <position position="37"/>
    </location>
    <ligand>
        <name>a divalent metal cation</name>
        <dbReference type="ChEBI" id="CHEBI:60240"/>
        <label>6</label>
        <note>in cluster A</note>
    </ligand>
</feature>
<feature type="binding site" evidence="1">
    <location>
        <position position="41"/>
    </location>
    <ligand>
        <name>a divalent metal cation</name>
        <dbReference type="ChEBI" id="CHEBI:60240"/>
        <label>6</label>
        <note>in cluster A</note>
    </ligand>
</feature>
<feature type="binding site" evidence="1">
    <location>
        <position position="44"/>
    </location>
    <ligand>
        <name>a divalent metal cation</name>
        <dbReference type="ChEBI" id="CHEBI:60240"/>
        <label>4</label>
        <note>in cluster A</note>
    </ligand>
</feature>
<feature type="binding site" evidence="1">
    <location>
        <position position="44"/>
    </location>
    <ligand>
        <name>a divalent metal cation</name>
        <dbReference type="ChEBI" id="CHEBI:60240"/>
        <label>6</label>
        <note>in cluster A</note>
    </ligand>
</feature>
<feature type="binding site" evidence="1">
    <location>
        <position position="48"/>
    </location>
    <ligand>
        <name>a divalent metal cation</name>
        <dbReference type="ChEBI" id="CHEBI:60240"/>
        <label>4</label>
        <note>in cluster A</note>
    </ligand>
</feature>
<feature type="binding site" evidence="1">
    <location>
        <position position="50"/>
    </location>
    <ligand>
        <name>a divalent metal cation</name>
        <dbReference type="ChEBI" id="CHEBI:60240"/>
        <label>5</label>
        <note>in cluster A</note>
    </ligand>
</feature>
<feature type="binding site" evidence="1">
    <location>
        <position position="50"/>
    </location>
    <ligand>
        <name>a divalent metal cation</name>
        <dbReference type="ChEBI" id="CHEBI:60240"/>
        <label>7</label>
        <note>in cluster A</note>
    </ligand>
</feature>
<feature type="binding site" evidence="1">
    <location>
        <position position="57"/>
    </location>
    <ligand>
        <name>a divalent metal cation</name>
        <dbReference type="ChEBI" id="CHEBI:60240"/>
        <label>7</label>
        <note>in cluster A</note>
    </ligand>
</feature>
<feature type="binding site" evidence="1">
    <location>
        <position position="59"/>
    </location>
    <ligand>
        <name>a divalent metal cation</name>
        <dbReference type="ChEBI" id="CHEBI:60240"/>
        <label>7</label>
        <note>in cluster A</note>
    </ligand>
</feature>
<feature type="binding site" evidence="1">
    <location>
        <position position="60"/>
    </location>
    <ligand>
        <name>a divalent metal cation</name>
        <dbReference type="ChEBI" id="CHEBI:60240"/>
        <label>6</label>
        <note>in cluster A</note>
    </ligand>
</feature>
<feature type="binding site" evidence="1">
    <location>
        <position position="60"/>
    </location>
    <ligand>
        <name>a divalent metal cation</name>
        <dbReference type="ChEBI" id="CHEBI:60240"/>
        <label>7</label>
        <note>in cluster A</note>
    </ligand>
</feature>
<feature type="modified residue" description="N-acetylmethionine" evidence="2">
    <location>
        <position position="1"/>
    </location>
</feature>
<feature type="modified residue" description="Phosphoserine" evidence="1">
    <location>
        <position position="58"/>
    </location>
</feature>
<name>MT2_BOVIN</name>
<proteinExistence type="evidence at protein level"/>